<protein>
    <recommendedName>
        <fullName>Hirudin-3A</fullName>
    </recommendedName>
    <alternativeName>
        <fullName>Hirudin IIIA</fullName>
    </alternativeName>
</protein>
<proteinExistence type="evidence at protein level"/>
<comment type="function">
    <text>Hirudin is a potent thrombin-specific protease inhibitor. It forms a stable non-covalent complex with alpha-thrombin, thereby abolishing its ability to cleave fibrinogen.</text>
</comment>
<comment type="subcellular location">
    <subcellularLocation>
        <location>Secreted</location>
    </subcellularLocation>
</comment>
<comment type="similarity">
    <text evidence="3">Belongs to the protease inhibitor I14 (hirudin) family.</text>
</comment>
<organism>
    <name type="scientific">Hirudo medicinalis</name>
    <name type="common">Medicinal leech</name>
    <dbReference type="NCBI Taxonomy" id="6421"/>
    <lineage>
        <taxon>Eukaryota</taxon>
        <taxon>Metazoa</taxon>
        <taxon>Spiralia</taxon>
        <taxon>Lophotrochozoa</taxon>
        <taxon>Annelida</taxon>
        <taxon>Clitellata</taxon>
        <taxon>Hirudinea</taxon>
        <taxon>Hirudinida</taxon>
        <taxon>Hirudiniformes</taxon>
        <taxon>Hirudinidae</taxon>
        <taxon>Hirudo</taxon>
    </lineage>
</organism>
<dbReference type="PIR" id="S05675">
    <property type="entry name" value="S05675"/>
</dbReference>
<dbReference type="PDB" id="1BMM">
    <property type="method" value="X-ray"/>
    <property type="resolution" value="2.60 A"/>
    <property type="chains" value="I=54-65"/>
</dbReference>
<dbReference type="PDB" id="1BMN">
    <property type="method" value="X-ray"/>
    <property type="resolution" value="2.80 A"/>
    <property type="chains" value="I=54-65"/>
</dbReference>
<dbReference type="PDB" id="1HAH">
    <property type="method" value="X-ray"/>
    <property type="resolution" value="2.30 A"/>
    <property type="chains" value="I=55-64"/>
</dbReference>
<dbReference type="PDB" id="1HGT">
    <property type="method" value="X-ray"/>
    <property type="resolution" value="2.20 A"/>
    <property type="chains" value="I=55-64"/>
</dbReference>
<dbReference type="PDB" id="1T4U">
    <property type="method" value="X-ray"/>
    <property type="resolution" value="2.00 A"/>
    <property type="chains" value="I=55-65"/>
</dbReference>
<dbReference type="PDB" id="1T4V">
    <property type="method" value="X-ray"/>
    <property type="resolution" value="2.00 A"/>
    <property type="chains" value="I=55-65"/>
</dbReference>
<dbReference type="PDB" id="1TOM">
    <property type="method" value="X-ray"/>
    <property type="resolution" value="1.80 A"/>
    <property type="chains" value="I=55-64"/>
</dbReference>
<dbReference type="PDB" id="1VIT">
    <property type="method" value="X-ray"/>
    <property type="resolution" value="3.20 A"/>
    <property type="chains" value="I/J=51-65"/>
</dbReference>
<dbReference type="PDB" id="2JH0">
    <property type="method" value="X-ray"/>
    <property type="resolution" value="1.70 A"/>
    <property type="chains" value="H=55-64"/>
</dbReference>
<dbReference type="PDB" id="2JH5">
    <property type="method" value="X-ray"/>
    <property type="resolution" value="2.50 A"/>
    <property type="chains" value="H=55-64"/>
</dbReference>
<dbReference type="PDB" id="2JH6">
    <property type="method" value="X-ray"/>
    <property type="resolution" value="2.21 A"/>
    <property type="chains" value="H=55-64"/>
</dbReference>
<dbReference type="PDB" id="3C27">
    <property type="method" value="X-ray"/>
    <property type="resolution" value="2.18 A"/>
    <property type="chains" value="H=55-65"/>
</dbReference>
<dbReference type="PDBsum" id="1BMM"/>
<dbReference type="PDBsum" id="1BMN"/>
<dbReference type="PDBsum" id="1HAH"/>
<dbReference type="PDBsum" id="1HGT"/>
<dbReference type="PDBsum" id="1T4U"/>
<dbReference type="PDBsum" id="1T4V"/>
<dbReference type="PDBsum" id="1TOM"/>
<dbReference type="PDBsum" id="1VIT"/>
<dbReference type="PDBsum" id="2JH0"/>
<dbReference type="PDBsum" id="2JH5"/>
<dbReference type="PDBsum" id="2JH6"/>
<dbReference type="PDBsum" id="3C27"/>
<dbReference type="SMR" id="P28507"/>
<dbReference type="Allergome" id="9843">
    <property type="allergen name" value="Hir me Hirudin"/>
</dbReference>
<dbReference type="EvolutionaryTrace" id="P28507"/>
<dbReference type="GO" id="GO:0005576">
    <property type="term" value="C:extracellular region"/>
    <property type="evidence" value="ECO:0007669"/>
    <property type="project" value="UniProtKB-SubCell"/>
</dbReference>
<dbReference type="GO" id="GO:0004867">
    <property type="term" value="F:serine-type endopeptidase inhibitor activity"/>
    <property type="evidence" value="ECO:0007669"/>
    <property type="project" value="UniProtKB-KW"/>
</dbReference>
<dbReference type="FunFam" id="2.70.10.10:FF:000001">
    <property type="entry name" value="Hirudin variant-1"/>
    <property type="match status" value="1"/>
</dbReference>
<dbReference type="Gene3D" id="2.70.10.10">
    <property type="entry name" value="Thrombin Inhibitor (Hirudin), subunit I"/>
    <property type="match status" value="1"/>
</dbReference>
<dbReference type="InterPro" id="IPR024793">
    <property type="entry name" value="Hirudin"/>
</dbReference>
<dbReference type="InterPro" id="IPR011061">
    <property type="entry name" value="Hirudin/antistatin"/>
</dbReference>
<dbReference type="InterPro" id="IPR000429">
    <property type="entry name" value="Prot_inh_hirudin"/>
</dbReference>
<dbReference type="Pfam" id="PF00713">
    <property type="entry name" value="Hirudin"/>
    <property type="match status" value="1"/>
</dbReference>
<dbReference type="PIRSF" id="PIRSF001640">
    <property type="entry name" value="Hirudin"/>
    <property type="match status" value="1"/>
</dbReference>
<dbReference type="PRINTS" id="PR00777">
    <property type="entry name" value="HIRUDIN"/>
</dbReference>
<dbReference type="SUPFAM" id="SSF57262">
    <property type="entry name" value="Leech antihemostatic proteins"/>
    <property type="match status" value="1"/>
</dbReference>
<feature type="chain" id="PRO_0000195647" description="Hirudin-3A">
    <location>
        <begin position="1"/>
        <end position="65"/>
    </location>
</feature>
<feature type="region of interest" description="Interaction with thrombin active site" evidence="1">
    <location>
        <begin position="1"/>
        <end position="3"/>
    </location>
</feature>
<feature type="region of interest" description="Disordered" evidence="2">
    <location>
        <begin position="39"/>
        <end position="65"/>
    </location>
</feature>
<feature type="region of interest" description="Interaction with fibrinogen-binding exosite of thrombin" evidence="1">
    <location>
        <begin position="55"/>
        <end position="65"/>
    </location>
</feature>
<feature type="compositionally biased region" description="Acidic residues" evidence="2">
    <location>
        <begin position="55"/>
        <end position="65"/>
    </location>
</feature>
<feature type="modified residue" description="Sulfotyrosine" evidence="1">
    <location>
        <position position="63"/>
    </location>
</feature>
<feature type="glycosylation site" description="O-linked (GalNAc...) threonine" evidence="1">
    <location>
        <position position="45"/>
    </location>
</feature>
<feature type="disulfide bond" evidence="1">
    <location>
        <begin position="6"/>
        <end position="14"/>
    </location>
</feature>
<feature type="disulfide bond" evidence="1">
    <location>
        <begin position="16"/>
        <end position="28"/>
    </location>
</feature>
<feature type="disulfide bond" evidence="1">
    <location>
        <begin position="22"/>
        <end position="39"/>
    </location>
</feature>
<feature type="helix" evidence="4">
    <location>
        <begin position="61"/>
        <end position="63"/>
    </location>
</feature>
<name>HIR3A_HIRME</name>
<evidence type="ECO:0000250" key="1"/>
<evidence type="ECO:0000256" key="2">
    <source>
        <dbReference type="SAM" id="MobiDB-lite"/>
    </source>
</evidence>
<evidence type="ECO:0000305" key="3"/>
<evidence type="ECO:0007829" key="4">
    <source>
        <dbReference type="PDB" id="2JH0"/>
    </source>
</evidence>
<accession>P28507</accession>
<keyword id="KW-0002">3D-structure</keyword>
<keyword id="KW-0903">Direct protein sequencing</keyword>
<keyword id="KW-1015">Disulfide bond</keyword>
<keyword id="KW-0325">Glycoprotein</keyword>
<keyword id="KW-0646">Protease inhibitor</keyword>
<keyword id="KW-0964">Secreted</keyword>
<keyword id="KW-0722">Serine protease inhibitor</keyword>
<keyword id="KW-0765">Sulfation</keyword>
<sequence>VVYTDCTESGQNLCLCEDSNVCGEGNKCILGSNGEKNQCVTGEGTPKPQSHNDGDFEEIPEEYLQ</sequence>
<reference key="1">
    <citation type="journal article" date="1989" name="FEBS Lett.">
        <title>Primary structures of new 'iso-hirudins'.</title>
        <authorList>
            <person name="Scharf M."/>
            <person name="Engels J."/>
            <person name="Tripier D."/>
        </authorList>
    </citation>
    <scope>PROTEIN SEQUENCE</scope>
</reference>